<sequence>MAEGGFDPCECVCSHEHAMRRLINLLRQSQSYCTDTECLQELPGPSGDNGISVTMILVAWMVIALILFLLRPPNLRGSNLPGKPTSPHNGQDPPAPPVD</sequence>
<keyword id="KW-0256">Endoplasmic reticulum</keyword>
<keyword id="KW-0472">Membrane</keyword>
<keyword id="KW-1185">Reference proteome</keyword>
<keyword id="KW-0812">Transmembrane</keyword>
<keyword id="KW-1133">Transmembrane helix</keyword>
<protein>
    <recommendedName>
        <fullName>Small integral membrane protein 14</fullName>
    </recommendedName>
</protein>
<feature type="chain" id="PRO_0000268818" description="Small integral membrane protein 14">
    <location>
        <begin position="1"/>
        <end position="99"/>
    </location>
</feature>
<feature type="topological domain" description="Lumenal" evidence="2">
    <location>
        <begin position="1"/>
        <end position="49"/>
    </location>
</feature>
<feature type="transmembrane region" description="Helical" evidence="2">
    <location>
        <begin position="50"/>
        <end position="70"/>
    </location>
</feature>
<feature type="topological domain" description="Cytoplasmic" evidence="2">
    <location>
        <begin position="71"/>
        <end position="99"/>
    </location>
</feature>
<feature type="region of interest" description="Disordered" evidence="3">
    <location>
        <begin position="77"/>
        <end position="99"/>
    </location>
</feature>
<organism>
    <name type="scientific">Pongo abelii</name>
    <name type="common">Sumatran orangutan</name>
    <name type="synonym">Pongo pygmaeus abelii</name>
    <dbReference type="NCBI Taxonomy" id="9601"/>
    <lineage>
        <taxon>Eukaryota</taxon>
        <taxon>Metazoa</taxon>
        <taxon>Chordata</taxon>
        <taxon>Craniata</taxon>
        <taxon>Vertebrata</taxon>
        <taxon>Euteleostomi</taxon>
        <taxon>Mammalia</taxon>
        <taxon>Eutheria</taxon>
        <taxon>Euarchontoglires</taxon>
        <taxon>Primates</taxon>
        <taxon>Haplorrhini</taxon>
        <taxon>Catarrhini</taxon>
        <taxon>Hominidae</taxon>
        <taxon>Pongo</taxon>
    </lineage>
</organism>
<reference key="1">
    <citation type="submission" date="2004-11" db="EMBL/GenBank/DDBJ databases">
        <authorList>
            <consortium name="The German cDNA consortium"/>
        </authorList>
    </citation>
    <scope>NUCLEOTIDE SEQUENCE [LARGE SCALE MRNA]</scope>
    <source>
        <tissue>Kidney</tissue>
    </source>
</reference>
<evidence type="ECO:0000250" key="1"/>
<evidence type="ECO:0000255" key="2"/>
<evidence type="ECO:0000256" key="3">
    <source>
        <dbReference type="SAM" id="MobiDB-lite"/>
    </source>
</evidence>
<dbReference type="EMBL" id="CR857354">
    <property type="protein sequence ID" value="CAH89650.1"/>
    <property type="molecule type" value="mRNA"/>
</dbReference>
<dbReference type="RefSeq" id="NP_001124741.1">
    <property type="nucleotide sequence ID" value="NM_001131269.2"/>
</dbReference>
<dbReference type="RefSeq" id="XP_024101253.1">
    <property type="nucleotide sequence ID" value="XM_024245485.3"/>
</dbReference>
<dbReference type="RefSeq" id="XP_054409151.1">
    <property type="nucleotide sequence ID" value="XM_054553176.2"/>
</dbReference>
<dbReference type="FunCoup" id="Q5RF07">
    <property type="interactions" value="1227"/>
</dbReference>
<dbReference type="STRING" id="9601.ENSPPYP00000016397"/>
<dbReference type="GeneID" id="100171590"/>
<dbReference type="KEGG" id="pon:100171590"/>
<dbReference type="CTD" id="201895"/>
<dbReference type="eggNOG" id="ENOG502S28C">
    <property type="taxonomic scope" value="Eukaryota"/>
</dbReference>
<dbReference type="HOGENOM" id="CLU_1247911_0_0_1"/>
<dbReference type="InParanoid" id="Q5RF07"/>
<dbReference type="OrthoDB" id="10054061at2759"/>
<dbReference type="Proteomes" id="UP000001595">
    <property type="component" value="Unplaced"/>
</dbReference>
<dbReference type="GO" id="GO:0005783">
    <property type="term" value="C:endoplasmic reticulum"/>
    <property type="evidence" value="ECO:0000250"/>
    <property type="project" value="UniProtKB"/>
</dbReference>
<dbReference type="GO" id="GO:0005789">
    <property type="term" value="C:endoplasmic reticulum membrane"/>
    <property type="evidence" value="ECO:0007669"/>
    <property type="project" value="UniProtKB-SubCell"/>
</dbReference>
<dbReference type="InterPro" id="IPR020309">
    <property type="entry name" value="Uncharacterised_CD034/YQF4"/>
</dbReference>
<dbReference type="PANTHER" id="PTHR31019">
    <property type="entry name" value="SMALL INTEGRAL MEMBRANE PROTEIN 14"/>
    <property type="match status" value="1"/>
</dbReference>
<dbReference type="PANTHER" id="PTHR31019:SF1">
    <property type="entry name" value="SMALL INTEGRAL MEMBRANE PROTEIN 14"/>
    <property type="match status" value="1"/>
</dbReference>
<dbReference type="Pfam" id="PF11027">
    <property type="entry name" value="DUF2615"/>
    <property type="match status" value="1"/>
</dbReference>
<gene>
    <name type="primary">SMIM14</name>
</gene>
<name>SIM14_PONAB</name>
<comment type="subcellular location">
    <subcellularLocation>
        <location evidence="1">Endoplasmic reticulum membrane</location>
        <topology evidence="1">Single-pass membrane protein</topology>
    </subcellularLocation>
</comment>
<accession>Q5RF07</accession>
<proteinExistence type="inferred from homology"/>